<accession>Q140U5</accession>
<gene>
    <name evidence="1" type="primary">rbfA</name>
    <name type="ordered locus">Bxeno_A1606</name>
    <name type="ORF">Bxe_A2819</name>
</gene>
<proteinExistence type="inferred from homology"/>
<reference key="1">
    <citation type="journal article" date="2006" name="Proc. Natl. Acad. Sci. U.S.A.">
        <title>Burkholderia xenovorans LB400 harbors a multi-replicon, 9.73-Mbp genome shaped for versatility.</title>
        <authorList>
            <person name="Chain P.S.G."/>
            <person name="Denef V.J."/>
            <person name="Konstantinidis K.T."/>
            <person name="Vergez L.M."/>
            <person name="Agullo L."/>
            <person name="Reyes V.L."/>
            <person name="Hauser L."/>
            <person name="Cordova M."/>
            <person name="Gomez L."/>
            <person name="Gonzalez M."/>
            <person name="Land M."/>
            <person name="Lao V."/>
            <person name="Larimer F."/>
            <person name="LiPuma J.J."/>
            <person name="Mahenthiralingam E."/>
            <person name="Malfatti S.A."/>
            <person name="Marx C.J."/>
            <person name="Parnell J.J."/>
            <person name="Ramette A."/>
            <person name="Richardson P."/>
            <person name="Seeger M."/>
            <person name="Smith D."/>
            <person name="Spilker T."/>
            <person name="Sul W.J."/>
            <person name="Tsoi T.V."/>
            <person name="Ulrich L.E."/>
            <person name="Zhulin I.B."/>
            <person name="Tiedje J.M."/>
        </authorList>
    </citation>
    <scope>NUCLEOTIDE SEQUENCE [LARGE SCALE GENOMIC DNA]</scope>
    <source>
        <strain>LB400</strain>
    </source>
</reference>
<feature type="chain" id="PRO_1000000085" description="Ribosome-binding factor A">
    <location>
        <begin position="1"/>
        <end position="121"/>
    </location>
</feature>
<protein>
    <recommendedName>
        <fullName evidence="1">Ribosome-binding factor A</fullName>
    </recommendedName>
</protein>
<organism>
    <name type="scientific">Paraburkholderia xenovorans (strain LB400)</name>
    <dbReference type="NCBI Taxonomy" id="266265"/>
    <lineage>
        <taxon>Bacteria</taxon>
        <taxon>Pseudomonadati</taxon>
        <taxon>Pseudomonadota</taxon>
        <taxon>Betaproteobacteria</taxon>
        <taxon>Burkholderiales</taxon>
        <taxon>Burkholderiaceae</taxon>
        <taxon>Paraburkholderia</taxon>
    </lineage>
</organism>
<sequence length="121" mass="13901">MPKKRSSPNRNVQIADQIQRDLSELLREVKDPRIGLVTIQSVELTPDYAHAKVYFTTLTGDPQQTLEALTHAAGHLHNQLFKRLHIHTVPTLHFHYDKTIERAVEMSRLIDEANANRAKED</sequence>
<evidence type="ECO:0000255" key="1">
    <source>
        <dbReference type="HAMAP-Rule" id="MF_00003"/>
    </source>
</evidence>
<keyword id="KW-0963">Cytoplasm</keyword>
<keyword id="KW-1185">Reference proteome</keyword>
<keyword id="KW-0690">Ribosome biogenesis</keyword>
<comment type="function">
    <text evidence="1">One of several proteins that assist in the late maturation steps of the functional core of the 30S ribosomal subunit. Associates with free 30S ribosomal subunits (but not with 30S subunits that are part of 70S ribosomes or polysomes). Required for efficient processing of 16S rRNA. May interact with the 5'-terminal helix region of 16S rRNA.</text>
</comment>
<comment type="subunit">
    <text evidence="1">Monomer. Binds 30S ribosomal subunits, but not 50S ribosomal subunits or 70S ribosomes.</text>
</comment>
<comment type="subcellular location">
    <subcellularLocation>
        <location evidence="1">Cytoplasm</location>
    </subcellularLocation>
</comment>
<comment type="similarity">
    <text evidence="1">Belongs to the RbfA family.</text>
</comment>
<dbReference type="EMBL" id="CP000270">
    <property type="protein sequence ID" value="ABE30144.1"/>
    <property type="molecule type" value="Genomic_DNA"/>
</dbReference>
<dbReference type="RefSeq" id="WP_011487847.1">
    <property type="nucleotide sequence ID" value="NZ_CP008760.1"/>
</dbReference>
<dbReference type="SMR" id="Q140U5"/>
<dbReference type="STRING" id="266265.Bxe_A2819"/>
<dbReference type="KEGG" id="bxb:DR64_501"/>
<dbReference type="KEGG" id="bxe:Bxe_A2819"/>
<dbReference type="PATRIC" id="fig|266265.5.peg.1672"/>
<dbReference type="eggNOG" id="COG0858">
    <property type="taxonomic scope" value="Bacteria"/>
</dbReference>
<dbReference type="OrthoDB" id="307788at2"/>
<dbReference type="Proteomes" id="UP000001817">
    <property type="component" value="Chromosome 1"/>
</dbReference>
<dbReference type="GO" id="GO:0005829">
    <property type="term" value="C:cytosol"/>
    <property type="evidence" value="ECO:0007669"/>
    <property type="project" value="TreeGrafter"/>
</dbReference>
<dbReference type="GO" id="GO:0043024">
    <property type="term" value="F:ribosomal small subunit binding"/>
    <property type="evidence" value="ECO:0007669"/>
    <property type="project" value="TreeGrafter"/>
</dbReference>
<dbReference type="GO" id="GO:0030490">
    <property type="term" value="P:maturation of SSU-rRNA"/>
    <property type="evidence" value="ECO:0007669"/>
    <property type="project" value="UniProtKB-UniRule"/>
</dbReference>
<dbReference type="Gene3D" id="3.30.300.20">
    <property type="match status" value="1"/>
</dbReference>
<dbReference type="HAMAP" id="MF_00003">
    <property type="entry name" value="RbfA"/>
    <property type="match status" value="1"/>
</dbReference>
<dbReference type="InterPro" id="IPR015946">
    <property type="entry name" value="KH_dom-like_a/b"/>
</dbReference>
<dbReference type="InterPro" id="IPR000238">
    <property type="entry name" value="RbfA"/>
</dbReference>
<dbReference type="InterPro" id="IPR023799">
    <property type="entry name" value="RbfA_dom_sf"/>
</dbReference>
<dbReference type="NCBIfam" id="TIGR00082">
    <property type="entry name" value="rbfA"/>
    <property type="match status" value="1"/>
</dbReference>
<dbReference type="PANTHER" id="PTHR33515">
    <property type="entry name" value="RIBOSOME-BINDING FACTOR A, CHLOROPLASTIC-RELATED"/>
    <property type="match status" value="1"/>
</dbReference>
<dbReference type="PANTHER" id="PTHR33515:SF1">
    <property type="entry name" value="RIBOSOME-BINDING FACTOR A, CHLOROPLASTIC-RELATED"/>
    <property type="match status" value="1"/>
</dbReference>
<dbReference type="Pfam" id="PF02033">
    <property type="entry name" value="RBFA"/>
    <property type="match status" value="1"/>
</dbReference>
<dbReference type="SUPFAM" id="SSF89919">
    <property type="entry name" value="Ribosome-binding factor A, RbfA"/>
    <property type="match status" value="1"/>
</dbReference>
<name>RBFA_PARXL</name>